<protein>
    <recommendedName>
        <fullName evidence="1">L-arabinose isomerase</fullName>
        <ecNumber evidence="1">5.3.1.4</ecNumber>
    </recommendedName>
</protein>
<reference key="1">
    <citation type="journal article" date="2005" name="Nucleic Acids Res.">
        <title>Genome dynamics and diversity of Shigella species, the etiologic agents of bacillary dysentery.</title>
        <authorList>
            <person name="Yang F."/>
            <person name="Yang J."/>
            <person name="Zhang X."/>
            <person name="Chen L."/>
            <person name="Jiang Y."/>
            <person name="Yan Y."/>
            <person name="Tang X."/>
            <person name="Wang J."/>
            <person name="Xiong Z."/>
            <person name="Dong J."/>
            <person name="Xue Y."/>
            <person name="Zhu Y."/>
            <person name="Xu X."/>
            <person name="Sun L."/>
            <person name="Chen S."/>
            <person name="Nie H."/>
            <person name="Peng J."/>
            <person name="Xu J."/>
            <person name="Wang Y."/>
            <person name="Yuan Z."/>
            <person name="Wen Y."/>
            <person name="Yao Z."/>
            <person name="Shen Y."/>
            <person name="Qiang B."/>
            <person name="Hou Y."/>
            <person name="Yu J."/>
            <person name="Jin Q."/>
        </authorList>
    </citation>
    <scope>NUCLEOTIDE SEQUENCE [LARGE SCALE GENOMIC DNA]</scope>
    <source>
        <strain>Sb227</strain>
    </source>
</reference>
<organism>
    <name type="scientific">Shigella boydii serotype 4 (strain Sb227)</name>
    <dbReference type="NCBI Taxonomy" id="300268"/>
    <lineage>
        <taxon>Bacteria</taxon>
        <taxon>Pseudomonadati</taxon>
        <taxon>Pseudomonadota</taxon>
        <taxon>Gammaproteobacteria</taxon>
        <taxon>Enterobacterales</taxon>
        <taxon>Enterobacteriaceae</taxon>
        <taxon>Shigella</taxon>
    </lineage>
</organism>
<dbReference type="EC" id="5.3.1.4" evidence="1"/>
<dbReference type="EMBL" id="CP000036">
    <property type="protein sequence ID" value="ABB64785.1"/>
    <property type="molecule type" value="Genomic_DNA"/>
</dbReference>
<dbReference type="RefSeq" id="WP_000151734.1">
    <property type="nucleotide sequence ID" value="NC_007613.1"/>
</dbReference>
<dbReference type="SMR" id="Q326H3"/>
<dbReference type="GeneID" id="93777375"/>
<dbReference type="KEGG" id="sbo:SBO_0049"/>
<dbReference type="HOGENOM" id="CLU_045663_0_0_6"/>
<dbReference type="UniPathway" id="UPA00145">
    <property type="reaction ID" value="UER00565"/>
</dbReference>
<dbReference type="Proteomes" id="UP000007067">
    <property type="component" value="Chromosome"/>
</dbReference>
<dbReference type="GO" id="GO:0005829">
    <property type="term" value="C:cytosol"/>
    <property type="evidence" value="ECO:0007669"/>
    <property type="project" value="TreeGrafter"/>
</dbReference>
<dbReference type="GO" id="GO:0008733">
    <property type="term" value="F:L-arabinose isomerase activity"/>
    <property type="evidence" value="ECO:0007669"/>
    <property type="project" value="UniProtKB-UniRule"/>
</dbReference>
<dbReference type="GO" id="GO:0030145">
    <property type="term" value="F:manganese ion binding"/>
    <property type="evidence" value="ECO:0007669"/>
    <property type="project" value="UniProtKB-UniRule"/>
</dbReference>
<dbReference type="GO" id="GO:0019569">
    <property type="term" value="P:L-arabinose catabolic process to xylulose 5-phosphate"/>
    <property type="evidence" value="ECO:0007669"/>
    <property type="project" value="UniProtKB-UniRule"/>
</dbReference>
<dbReference type="CDD" id="cd03557">
    <property type="entry name" value="L-arabinose_isomerase"/>
    <property type="match status" value="1"/>
</dbReference>
<dbReference type="FunFam" id="3.40.50.10940:FF:000001">
    <property type="entry name" value="L-arabinose isomerase"/>
    <property type="match status" value="1"/>
</dbReference>
<dbReference type="Gene3D" id="3.40.50.10940">
    <property type="match status" value="1"/>
</dbReference>
<dbReference type="HAMAP" id="MF_00519">
    <property type="entry name" value="Arabinose_Isome"/>
    <property type="match status" value="1"/>
</dbReference>
<dbReference type="InterPro" id="IPR024664">
    <property type="entry name" value="Ara_Isoase_C"/>
</dbReference>
<dbReference type="InterPro" id="IPR055390">
    <property type="entry name" value="AraA_central"/>
</dbReference>
<dbReference type="InterPro" id="IPR055389">
    <property type="entry name" value="AraA_N"/>
</dbReference>
<dbReference type="InterPro" id="IPR038583">
    <property type="entry name" value="AraA_N_sf"/>
</dbReference>
<dbReference type="InterPro" id="IPR004216">
    <property type="entry name" value="Fuc/Ara_isomerase_C"/>
</dbReference>
<dbReference type="InterPro" id="IPR009015">
    <property type="entry name" value="Fucose_isomerase_N/cen_sf"/>
</dbReference>
<dbReference type="InterPro" id="IPR003762">
    <property type="entry name" value="Lara_isomerase"/>
</dbReference>
<dbReference type="NCBIfam" id="NF002795">
    <property type="entry name" value="PRK02929.1"/>
    <property type="match status" value="1"/>
</dbReference>
<dbReference type="PANTHER" id="PTHR38464">
    <property type="entry name" value="L-ARABINOSE ISOMERASE"/>
    <property type="match status" value="1"/>
</dbReference>
<dbReference type="PANTHER" id="PTHR38464:SF1">
    <property type="entry name" value="L-ARABINOSE ISOMERASE"/>
    <property type="match status" value="1"/>
</dbReference>
<dbReference type="Pfam" id="PF24856">
    <property type="entry name" value="AraA_central"/>
    <property type="match status" value="1"/>
</dbReference>
<dbReference type="Pfam" id="PF02610">
    <property type="entry name" value="AraA_N"/>
    <property type="match status" value="1"/>
</dbReference>
<dbReference type="Pfam" id="PF11762">
    <property type="entry name" value="Arabinose_Iso_C"/>
    <property type="match status" value="1"/>
</dbReference>
<dbReference type="PIRSF" id="PIRSF001478">
    <property type="entry name" value="L-ara_isomerase"/>
    <property type="match status" value="1"/>
</dbReference>
<dbReference type="SUPFAM" id="SSF50443">
    <property type="entry name" value="FucI/AraA C-terminal domain-like"/>
    <property type="match status" value="1"/>
</dbReference>
<dbReference type="SUPFAM" id="SSF53743">
    <property type="entry name" value="FucI/AraA N-terminal and middle domains"/>
    <property type="match status" value="1"/>
</dbReference>
<keyword id="KW-0054">Arabinose catabolism</keyword>
<keyword id="KW-0119">Carbohydrate metabolism</keyword>
<keyword id="KW-0413">Isomerase</keyword>
<keyword id="KW-0464">Manganese</keyword>
<keyword id="KW-0479">Metal-binding</keyword>
<comment type="function">
    <text evidence="1">Catalyzes the conversion of L-arabinose to L-ribulose.</text>
</comment>
<comment type="catalytic activity">
    <reaction evidence="1">
        <text>beta-L-arabinopyranose = L-ribulose</text>
        <dbReference type="Rhea" id="RHEA:14821"/>
        <dbReference type="ChEBI" id="CHEBI:16880"/>
        <dbReference type="ChEBI" id="CHEBI:40886"/>
        <dbReference type="EC" id="5.3.1.4"/>
    </reaction>
</comment>
<comment type="cofactor">
    <cofactor evidence="1">
        <name>Mn(2+)</name>
        <dbReference type="ChEBI" id="CHEBI:29035"/>
    </cofactor>
    <text evidence="1">Binds 1 Mn(2+) ion per subunit.</text>
</comment>
<comment type="pathway">
    <text evidence="1">Carbohydrate degradation; L-arabinose degradation via L-ribulose; D-xylulose 5-phosphate from L-arabinose (bacterial route): step 1/3.</text>
</comment>
<comment type="subunit">
    <text evidence="1">Homohexamer.</text>
</comment>
<comment type="similarity">
    <text evidence="1">Belongs to the arabinose isomerase family.</text>
</comment>
<name>ARAA_SHIBS</name>
<feature type="chain" id="PRO_0000259343" description="L-arabinose isomerase">
    <location>
        <begin position="1"/>
        <end position="500"/>
    </location>
</feature>
<feature type="binding site" evidence="1">
    <location>
        <position position="306"/>
    </location>
    <ligand>
        <name>Mn(2+)</name>
        <dbReference type="ChEBI" id="CHEBI:29035"/>
    </ligand>
</feature>
<feature type="binding site" evidence="1">
    <location>
        <position position="333"/>
    </location>
    <ligand>
        <name>Mn(2+)</name>
        <dbReference type="ChEBI" id="CHEBI:29035"/>
    </ligand>
</feature>
<feature type="binding site" evidence="1">
    <location>
        <position position="350"/>
    </location>
    <ligand>
        <name>Mn(2+)</name>
        <dbReference type="ChEBI" id="CHEBI:29035"/>
    </ligand>
</feature>
<feature type="binding site" evidence="1">
    <location>
        <position position="450"/>
    </location>
    <ligand>
        <name>Mn(2+)</name>
        <dbReference type="ChEBI" id="CHEBI:29035"/>
    </ligand>
</feature>
<gene>
    <name evidence="1" type="primary">araA</name>
    <name type="ordered locus">SBO_0049</name>
</gene>
<sequence>MTIFDNYEVWFVIGSQHLYGPETLRQVTQHAEHVVNALNTEAKLPCKLVLKPLGTTPDEITAICRDANYDDRCAGLVVWLHTFSPAKMWINGLTMLNKPLLQFHTQFNAALPWDSIDMDFMNLNQTAHGGREFGFIGARMRQQHAVVTGHWQDKQAHERIGSWMRQAVSKQDTRHLKVCRFGDNMREVAVTDGDKVAAQIKFGFSVNTWAVGDLVQVVNSISDGDVNALVDEYESCYTMTPATQIHGEKRQNVLEAARIELGMKRFLEQGGFHAFTTTFEDLHGLKQLPGLAVQRLMQQGYGFAGEGDWKTAALLRIMKVMSTGLQGGTSFMEDYTYHFEKGNDLVLGSHMLEVCPSIAVEEKPILDVQHLGIGGKDDPARLIFNTQTGPAIVASLIDLGDRYRLLVNCIDTVKTPHSLPKLPVANALWKAQPDLPTASEAWILAGGAHHTVFSHALNLNDMRQFAEMHDIEITVIDNDTRLPAFKDALRWNEVYYGFRR</sequence>
<evidence type="ECO:0000255" key="1">
    <source>
        <dbReference type="HAMAP-Rule" id="MF_00519"/>
    </source>
</evidence>
<proteinExistence type="inferred from homology"/>
<accession>Q326H3</accession>